<sequence length="61" mass="6909">MPELQERIRNFLKESKRVFLVTRKPGWEEYKKAAKITGLGIILIGLIGMLIRIMGILVLGG</sequence>
<accession>Q9V2S1</accession>
<accession>G8ZFH8</accession>
<dbReference type="EMBL" id="AJ248283">
    <property type="protein sequence ID" value="CAB48927.1"/>
    <property type="molecule type" value="Genomic_DNA"/>
</dbReference>
<dbReference type="EMBL" id="HE613800">
    <property type="protein sequence ID" value="CCE69369.1"/>
    <property type="molecule type" value="Genomic_DNA"/>
</dbReference>
<dbReference type="PIR" id="H75184">
    <property type="entry name" value="H75184"/>
</dbReference>
<dbReference type="RefSeq" id="WP_010867127.1">
    <property type="nucleotide sequence ID" value="NC_000868.1"/>
</dbReference>
<dbReference type="SMR" id="Q9V2S1"/>
<dbReference type="STRING" id="272844.PAB3002"/>
<dbReference type="KEGG" id="pab:PAB3002"/>
<dbReference type="PATRIC" id="fig|272844.11.peg.3"/>
<dbReference type="eggNOG" id="arCOG02204">
    <property type="taxonomic scope" value="Archaea"/>
</dbReference>
<dbReference type="HOGENOM" id="CLU_191921_0_1_2"/>
<dbReference type="OrthoDB" id="86216at2157"/>
<dbReference type="PhylomeDB" id="Q9V2S1"/>
<dbReference type="Proteomes" id="UP000000810">
    <property type="component" value="Chromosome"/>
</dbReference>
<dbReference type="Proteomes" id="UP000009139">
    <property type="component" value="Chromosome"/>
</dbReference>
<dbReference type="GO" id="GO:0005886">
    <property type="term" value="C:plasma membrane"/>
    <property type="evidence" value="ECO:0007669"/>
    <property type="project" value="UniProtKB-SubCell"/>
</dbReference>
<dbReference type="GO" id="GO:0008320">
    <property type="term" value="F:protein transmembrane transporter activity"/>
    <property type="evidence" value="ECO:0007669"/>
    <property type="project" value="UniProtKB-UniRule"/>
</dbReference>
<dbReference type="GO" id="GO:0065002">
    <property type="term" value="P:intracellular protein transmembrane transport"/>
    <property type="evidence" value="ECO:0007669"/>
    <property type="project" value="UniProtKB-UniRule"/>
</dbReference>
<dbReference type="GO" id="GO:0009306">
    <property type="term" value="P:protein secretion"/>
    <property type="evidence" value="ECO:0007669"/>
    <property type="project" value="UniProtKB-UniRule"/>
</dbReference>
<dbReference type="GO" id="GO:0006605">
    <property type="term" value="P:protein targeting"/>
    <property type="evidence" value="ECO:0007669"/>
    <property type="project" value="UniProtKB-UniRule"/>
</dbReference>
<dbReference type="Gene3D" id="1.20.5.820">
    <property type="entry name" value="Preprotein translocase SecE subunit"/>
    <property type="match status" value="1"/>
</dbReference>
<dbReference type="HAMAP" id="MF_00422">
    <property type="entry name" value="SecE"/>
    <property type="match status" value="1"/>
</dbReference>
<dbReference type="InterPro" id="IPR023391">
    <property type="entry name" value="Prot_translocase_SecE_dom_sf"/>
</dbReference>
<dbReference type="InterPro" id="IPR008158">
    <property type="entry name" value="Translocase_Sec61-g"/>
</dbReference>
<dbReference type="InterPro" id="IPR001901">
    <property type="entry name" value="Translocase_SecE/Sec61-g"/>
</dbReference>
<dbReference type="NCBIfam" id="NF006909">
    <property type="entry name" value="PRK09400.1-4"/>
    <property type="match status" value="1"/>
</dbReference>
<dbReference type="NCBIfam" id="TIGR00327">
    <property type="entry name" value="secE_euk_arch"/>
    <property type="match status" value="1"/>
</dbReference>
<dbReference type="Pfam" id="PF00584">
    <property type="entry name" value="SecE"/>
    <property type="match status" value="1"/>
</dbReference>
<dbReference type="SUPFAM" id="SSF103456">
    <property type="entry name" value="Preprotein translocase SecE subunit"/>
    <property type="match status" value="1"/>
</dbReference>
<dbReference type="PROSITE" id="PS01067">
    <property type="entry name" value="SECE_SEC61G"/>
    <property type="match status" value="1"/>
</dbReference>
<organism>
    <name type="scientific">Pyrococcus abyssi (strain GE5 / Orsay)</name>
    <dbReference type="NCBI Taxonomy" id="272844"/>
    <lineage>
        <taxon>Archaea</taxon>
        <taxon>Methanobacteriati</taxon>
        <taxon>Methanobacteriota</taxon>
        <taxon>Thermococci</taxon>
        <taxon>Thermococcales</taxon>
        <taxon>Thermococcaceae</taxon>
        <taxon>Pyrococcus</taxon>
    </lineage>
</organism>
<gene>
    <name evidence="1" type="primary">secE</name>
    <name type="ordered locus">PYRAB00040</name>
    <name type="ORF">PAB3002</name>
</gene>
<proteinExistence type="inferred from homology"/>
<feature type="chain" id="PRO_0000104224" description="Protein translocase subunit SecE">
    <location>
        <begin position="1"/>
        <end position="61"/>
    </location>
</feature>
<feature type="transmembrane region" description="Helical" evidence="1">
    <location>
        <begin position="39"/>
        <end position="59"/>
    </location>
</feature>
<comment type="function">
    <text evidence="1">Essential subunit of the Sec protein translocation channel SecYEG. Clamps together the 2 halves of SecY. May contact the channel plug during translocation.</text>
</comment>
<comment type="subunit">
    <text evidence="1">Component of the Sec protein translocase complex. Heterotrimer consisting of SecY (alpha), SecG (beta) and SecE (gamma) subunits. The heterotrimers can form oligomers, although 1 heterotrimer is thought to be able to translocate proteins. Interacts with the ribosome. May interact with SecDF, and other proteins may be involved.</text>
</comment>
<comment type="subcellular location">
    <subcellularLocation>
        <location evidence="1">Cell membrane</location>
        <topology evidence="1">Single-pass membrane protein</topology>
    </subcellularLocation>
</comment>
<comment type="similarity">
    <text evidence="1">Belongs to the SecE/SEC61-gamma family.</text>
</comment>
<keyword id="KW-1003">Cell membrane</keyword>
<keyword id="KW-0472">Membrane</keyword>
<keyword id="KW-0653">Protein transport</keyword>
<keyword id="KW-0811">Translocation</keyword>
<keyword id="KW-0812">Transmembrane</keyword>
<keyword id="KW-1133">Transmembrane helix</keyword>
<keyword id="KW-0813">Transport</keyword>
<reference key="1">
    <citation type="journal article" date="2003" name="Mol. Microbiol.">
        <title>An integrated analysis of the genome of the hyperthermophilic archaeon Pyrococcus abyssi.</title>
        <authorList>
            <person name="Cohen G.N."/>
            <person name="Barbe V."/>
            <person name="Flament D."/>
            <person name="Galperin M."/>
            <person name="Heilig R."/>
            <person name="Lecompte O."/>
            <person name="Poch O."/>
            <person name="Prieur D."/>
            <person name="Querellou J."/>
            <person name="Ripp R."/>
            <person name="Thierry J.-C."/>
            <person name="Van der Oost J."/>
            <person name="Weissenbach J."/>
            <person name="Zivanovic Y."/>
            <person name="Forterre P."/>
        </authorList>
    </citation>
    <scope>NUCLEOTIDE SEQUENCE [LARGE SCALE GENOMIC DNA]</scope>
    <source>
        <strain>GE5 / Orsay</strain>
    </source>
</reference>
<reference key="2">
    <citation type="journal article" date="2012" name="Curr. Microbiol.">
        <title>Re-annotation of two hyperthermophilic archaea Pyrococcus abyssi GE5 and Pyrococcus furiosus DSM 3638.</title>
        <authorList>
            <person name="Gao J."/>
            <person name="Wang J."/>
        </authorList>
    </citation>
    <scope>GENOME REANNOTATION</scope>
    <source>
        <strain>GE5 / Orsay</strain>
    </source>
</reference>
<name>SECE_PYRAB</name>
<protein>
    <recommendedName>
        <fullName evidence="1">Protein translocase subunit SecE</fullName>
    </recommendedName>
    <alternativeName>
        <fullName evidence="1">Protein transport protein Sec61 gamma subunit homolog</fullName>
    </alternativeName>
</protein>
<evidence type="ECO:0000255" key="1">
    <source>
        <dbReference type="HAMAP-Rule" id="MF_00422"/>
    </source>
</evidence>